<name>YIDD_SHEON</name>
<organism>
    <name type="scientific">Shewanella oneidensis (strain ATCC 700550 / JCM 31522 / CIP 106686 / LMG 19005 / NCIMB 14063 / MR-1)</name>
    <dbReference type="NCBI Taxonomy" id="211586"/>
    <lineage>
        <taxon>Bacteria</taxon>
        <taxon>Pseudomonadati</taxon>
        <taxon>Pseudomonadota</taxon>
        <taxon>Gammaproteobacteria</taxon>
        <taxon>Alteromonadales</taxon>
        <taxon>Shewanellaceae</taxon>
        <taxon>Shewanella</taxon>
    </lineage>
</organism>
<accession>Q8EKT5</accession>
<gene>
    <name type="ordered locus">SO_0005</name>
</gene>
<comment type="function">
    <text evidence="1">Could be involved in insertion of integral membrane proteins into the membrane.</text>
</comment>
<comment type="subcellular location">
    <subcellularLocation>
        <location evidence="1">Cell inner membrane</location>
        <topology evidence="1">Peripheral membrane protein</topology>
        <orientation evidence="1">Cytoplasmic side</orientation>
    </subcellularLocation>
</comment>
<comment type="similarity">
    <text evidence="1">Belongs to the UPF0161 family.</text>
</comment>
<reference key="1">
    <citation type="journal article" date="2002" name="Nat. Biotechnol.">
        <title>Genome sequence of the dissimilatory metal ion-reducing bacterium Shewanella oneidensis.</title>
        <authorList>
            <person name="Heidelberg J.F."/>
            <person name="Paulsen I.T."/>
            <person name="Nelson K.E."/>
            <person name="Gaidos E.J."/>
            <person name="Nelson W.C."/>
            <person name="Read T.D."/>
            <person name="Eisen J.A."/>
            <person name="Seshadri R."/>
            <person name="Ward N.L."/>
            <person name="Methe B.A."/>
            <person name="Clayton R.A."/>
            <person name="Meyer T."/>
            <person name="Tsapin A."/>
            <person name="Scott J."/>
            <person name="Beanan M.J."/>
            <person name="Brinkac L.M."/>
            <person name="Daugherty S.C."/>
            <person name="DeBoy R.T."/>
            <person name="Dodson R.J."/>
            <person name="Durkin A.S."/>
            <person name="Haft D.H."/>
            <person name="Kolonay J.F."/>
            <person name="Madupu R."/>
            <person name="Peterson J.D."/>
            <person name="Umayam L.A."/>
            <person name="White O."/>
            <person name="Wolf A.M."/>
            <person name="Vamathevan J.J."/>
            <person name="Weidman J.F."/>
            <person name="Impraim M."/>
            <person name="Lee K."/>
            <person name="Berry K.J."/>
            <person name="Lee C."/>
            <person name="Mueller J."/>
            <person name="Khouri H.M."/>
            <person name="Gill J."/>
            <person name="Utterback T.R."/>
            <person name="McDonald L.A."/>
            <person name="Feldblyum T.V."/>
            <person name="Smith H.O."/>
            <person name="Venter J.C."/>
            <person name="Nealson K.H."/>
            <person name="Fraser C.M."/>
        </authorList>
    </citation>
    <scope>NUCLEOTIDE SEQUENCE [LARGE SCALE GENOMIC DNA]</scope>
    <source>
        <strain>ATCC 700550 / JCM 31522 / CIP 106686 / LMG 19005 / NCIMB 14063 / MR-1</strain>
    </source>
</reference>
<feature type="chain" id="PRO_0000171864" description="Putative membrane protein insertion efficiency factor">
    <location>
        <begin position="1"/>
        <end position="84"/>
    </location>
</feature>
<protein>
    <recommendedName>
        <fullName evidence="1">Putative membrane protein insertion efficiency factor</fullName>
    </recommendedName>
</protein>
<sequence length="84" mass="9397">MAQTQSPLQWLATTLIRGYQIFISPILGPRCRFNPTCSHYAIEAIKVHGTAKGCWFALKRILKCHPLHPGGSDPVPPKNDRCNK</sequence>
<dbReference type="EMBL" id="AE014299">
    <property type="protein sequence ID" value="AAN53092.1"/>
    <property type="molecule type" value="Genomic_DNA"/>
</dbReference>
<dbReference type="RefSeq" id="NP_715647.1">
    <property type="nucleotide sequence ID" value="NC_004347.2"/>
</dbReference>
<dbReference type="STRING" id="211586.SO_0005"/>
<dbReference type="PaxDb" id="211586-SO_0005"/>
<dbReference type="KEGG" id="son:SO_0005"/>
<dbReference type="PATRIC" id="fig|211586.12.peg.5"/>
<dbReference type="eggNOG" id="COG0759">
    <property type="taxonomic scope" value="Bacteria"/>
</dbReference>
<dbReference type="HOGENOM" id="CLU_144811_5_2_6"/>
<dbReference type="OrthoDB" id="9801753at2"/>
<dbReference type="PhylomeDB" id="Q8EKT5"/>
<dbReference type="BioCyc" id="SONE211586:G1GMP-5-MONOMER"/>
<dbReference type="Proteomes" id="UP000008186">
    <property type="component" value="Chromosome"/>
</dbReference>
<dbReference type="GO" id="GO:0005886">
    <property type="term" value="C:plasma membrane"/>
    <property type="evidence" value="ECO:0007669"/>
    <property type="project" value="UniProtKB-SubCell"/>
</dbReference>
<dbReference type="HAMAP" id="MF_00386">
    <property type="entry name" value="UPF0161_YidD"/>
    <property type="match status" value="1"/>
</dbReference>
<dbReference type="InterPro" id="IPR002696">
    <property type="entry name" value="Membr_insert_effic_factor_YidD"/>
</dbReference>
<dbReference type="NCBIfam" id="TIGR00278">
    <property type="entry name" value="membrane protein insertion efficiency factor YidD"/>
    <property type="match status" value="1"/>
</dbReference>
<dbReference type="PANTHER" id="PTHR33383">
    <property type="entry name" value="MEMBRANE PROTEIN INSERTION EFFICIENCY FACTOR-RELATED"/>
    <property type="match status" value="1"/>
</dbReference>
<dbReference type="PANTHER" id="PTHR33383:SF1">
    <property type="entry name" value="MEMBRANE PROTEIN INSERTION EFFICIENCY FACTOR-RELATED"/>
    <property type="match status" value="1"/>
</dbReference>
<dbReference type="Pfam" id="PF01809">
    <property type="entry name" value="YidD"/>
    <property type="match status" value="1"/>
</dbReference>
<dbReference type="SMART" id="SM01234">
    <property type="entry name" value="Haemolytic"/>
    <property type="match status" value="1"/>
</dbReference>
<evidence type="ECO:0000255" key="1">
    <source>
        <dbReference type="HAMAP-Rule" id="MF_00386"/>
    </source>
</evidence>
<keyword id="KW-0997">Cell inner membrane</keyword>
<keyword id="KW-1003">Cell membrane</keyword>
<keyword id="KW-0472">Membrane</keyword>
<keyword id="KW-1185">Reference proteome</keyword>
<proteinExistence type="inferred from homology"/>